<feature type="initiator methionine" description="Removed" evidence="3">
    <location>
        <position position="1"/>
    </location>
</feature>
<feature type="chain" id="PRO_0000240589" description="AP-1 complex subunit mu-1">
    <location>
        <begin position="2"/>
        <end position="423"/>
    </location>
</feature>
<feature type="domain" description="MHD" evidence="5">
    <location>
        <begin position="168"/>
        <end position="421"/>
    </location>
</feature>
<feature type="modified residue" description="N-acetylserine" evidence="3">
    <location>
        <position position="2"/>
    </location>
</feature>
<feature type="modified residue" description="Phosphothreonine" evidence="3">
    <location>
        <position position="152"/>
    </location>
</feature>
<feature type="modified residue" description="Phosphothreonine" evidence="3">
    <location>
        <position position="154"/>
    </location>
</feature>
<feature type="modified residue" description="Phosphothreonine" evidence="2">
    <location>
        <position position="223"/>
    </location>
</feature>
<comment type="function">
    <text evidence="3 6">Subunit of clathrin-associated adaptor protein complex 1 that plays a role in protein sorting in the trans-Golgi network (TGN) and endosomes. The AP complexes mediate the recruitment of clathrin to membranes and the recognition of sorting signals within the cytosolic tails of transmembrane cargo molecules.</text>
</comment>
<comment type="subunit">
    <text evidence="1">Adaptor protein complex 1 (AP-1) is a heterotetramer composed of two large adaptins (gamma-type subunit AP1G1 and beta-type subunit AP1B1), a medium adaptin (mu-type subunit AP1M1 or AP1M2) and a small adaptin (sigma-type subunit AP1S1 or AP1S2 or AP1S3). Interacts with MARCHF11 (By similarity).</text>
</comment>
<comment type="subcellular location">
    <subcellularLocation>
        <location evidence="1">Cytoplasmic vesicle</location>
        <location evidence="1">Clathrin-coated vesicle membrane</location>
        <topology evidence="1">Peripheral membrane protein</topology>
        <orientation evidence="1">Cytoplasmic side</orientation>
    </subcellularLocation>
    <subcellularLocation>
        <location evidence="1">Golgi apparatus</location>
    </subcellularLocation>
    <text evidence="1">Component of the coat surrounding the cytoplasmic face of coated vesicles located at the Golgi complex.</text>
</comment>
<comment type="PTM">
    <text evidence="6">Phosphorylation of membrane-bound AP1M1/AP1M2 increases its affinity for sorting signals.</text>
</comment>
<comment type="similarity">
    <text evidence="4">Belongs to the adaptor complexes medium subunit family.</text>
</comment>
<comment type="sequence caution" evidence="7">
    <conflict type="erroneous termination">
        <sequence resource="EMBL-CDS" id="AAI05478"/>
    </conflict>
    <text>Truncated C-terminus.</text>
</comment>
<evidence type="ECO:0000250" key="1"/>
<evidence type="ECO:0000250" key="2">
    <source>
        <dbReference type="UniProtKB" id="Q32Q06"/>
    </source>
</evidence>
<evidence type="ECO:0000250" key="3">
    <source>
        <dbReference type="UniProtKB" id="Q9BXS5"/>
    </source>
</evidence>
<evidence type="ECO:0000255" key="4"/>
<evidence type="ECO:0000255" key="5">
    <source>
        <dbReference type="PROSITE-ProRule" id="PRU00404"/>
    </source>
</evidence>
<evidence type="ECO:0000269" key="6">
    <source>
    </source>
</evidence>
<evidence type="ECO:0000305" key="7"/>
<evidence type="ECO:0000312" key="8">
    <source>
        <dbReference type="EMBL" id="AAI05478.1"/>
    </source>
</evidence>
<reference evidence="8" key="1">
    <citation type="submission" date="2005-09" db="EMBL/GenBank/DDBJ databases">
        <authorList>
            <consortium name="NIH - Mammalian Gene Collection (MGC) project"/>
        </authorList>
    </citation>
    <scope>NUCLEOTIDE SEQUENCE [LARGE SCALE MRNA]</scope>
    <source>
        <strain evidence="8">Hereford</strain>
        <tissue evidence="8">Hypothalamus</tissue>
    </source>
</reference>
<reference evidence="7" key="2">
    <citation type="journal article" date="2003" name="J. Cell Biol.">
        <title>AP-1 binding to sorting signals and release from clathrin-coated vesicles is regulated by phosphorylation.</title>
        <authorList>
            <person name="Ghosh P."/>
            <person name="Kornfeld S."/>
        </authorList>
    </citation>
    <scope>FUNCTION</scope>
    <scope>PHOSPHORYLATION</scope>
</reference>
<accession>Q2KJ81</accession>
<keyword id="KW-0007">Acetylation</keyword>
<keyword id="KW-0968">Cytoplasmic vesicle</keyword>
<keyword id="KW-0333">Golgi apparatus</keyword>
<keyword id="KW-0472">Membrane</keyword>
<keyword id="KW-0597">Phosphoprotein</keyword>
<keyword id="KW-0653">Protein transport</keyword>
<keyword id="KW-1185">Reference proteome</keyword>
<keyword id="KW-0813">Transport</keyword>
<organism>
    <name type="scientific">Bos taurus</name>
    <name type="common">Bovine</name>
    <dbReference type="NCBI Taxonomy" id="9913"/>
    <lineage>
        <taxon>Eukaryota</taxon>
        <taxon>Metazoa</taxon>
        <taxon>Chordata</taxon>
        <taxon>Craniata</taxon>
        <taxon>Vertebrata</taxon>
        <taxon>Euteleostomi</taxon>
        <taxon>Mammalia</taxon>
        <taxon>Eutheria</taxon>
        <taxon>Laurasiatheria</taxon>
        <taxon>Artiodactyla</taxon>
        <taxon>Ruminantia</taxon>
        <taxon>Pecora</taxon>
        <taxon>Bovidae</taxon>
        <taxon>Bovinae</taxon>
        <taxon>Bos</taxon>
    </lineage>
</organism>
<dbReference type="EMBL" id="BC105477">
    <property type="protein sequence ID" value="AAI05478.1"/>
    <property type="status" value="ALT_SEQ"/>
    <property type="molecule type" value="mRNA"/>
</dbReference>
<dbReference type="RefSeq" id="NP_001039349.2">
    <property type="nucleotide sequence ID" value="NM_001045884.2"/>
</dbReference>
<dbReference type="SMR" id="Q2KJ81"/>
<dbReference type="FunCoup" id="Q2KJ81">
    <property type="interactions" value="4267"/>
</dbReference>
<dbReference type="STRING" id="9913.ENSBTAP00000064087"/>
<dbReference type="PaxDb" id="9913-ENSBTAP00000017724"/>
<dbReference type="Ensembl" id="ENSBTAT00000017724.6">
    <property type="protein sequence ID" value="ENSBTAP00000017724.4"/>
    <property type="gene ID" value="ENSBTAG00000013329.6"/>
</dbReference>
<dbReference type="GeneID" id="504310"/>
<dbReference type="KEGG" id="bta:504310"/>
<dbReference type="CTD" id="8907"/>
<dbReference type="VEuPathDB" id="HostDB:ENSBTAG00000013329"/>
<dbReference type="VGNC" id="VGNC:25979">
    <property type="gene designation" value="AP1M1"/>
</dbReference>
<dbReference type="eggNOG" id="KOG0937">
    <property type="taxonomic scope" value="Eukaryota"/>
</dbReference>
<dbReference type="GeneTree" id="ENSGT00940000157924"/>
<dbReference type="HOGENOM" id="CLU_026996_0_2_1"/>
<dbReference type="InParanoid" id="Q2KJ81"/>
<dbReference type="OMA" id="KPLIWCD"/>
<dbReference type="OrthoDB" id="10259133at2759"/>
<dbReference type="TreeFam" id="TF300393"/>
<dbReference type="Reactome" id="R-BTA-2132295">
    <property type="pathway name" value="MHC class II antigen presentation"/>
</dbReference>
<dbReference type="Reactome" id="R-BTA-432720">
    <property type="pathway name" value="Lysosome Vesicle Biogenesis"/>
</dbReference>
<dbReference type="Reactome" id="R-BTA-432722">
    <property type="pathway name" value="Golgi Associated Vesicle Biogenesis"/>
</dbReference>
<dbReference type="Reactome" id="R-BTA-6798695">
    <property type="pathway name" value="Neutrophil degranulation"/>
</dbReference>
<dbReference type="Proteomes" id="UP000009136">
    <property type="component" value="Chromosome 7"/>
</dbReference>
<dbReference type="Bgee" id="ENSBTAG00000013329">
    <property type="expression patterns" value="Expressed in spermatid and 104 other cell types or tissues"/>
</dbReference>
<dbReference type="GO" id="GO:0030131">
    <property type="term" value="C:clathrin adaptor complex"/>
    <property type="evidence" value="ECO:0007669"/>
    <property type="project" value="InterPro"/>
</dbReference>
<dbReference type="GO" id="GO:0030136">
    <property type="term" value="C:clathrin-coated vesicle"/>
    <property type="evidence" value="ECO:0000318"/>
    <property type="project" value="GO_Central"/>
</dbReference>
<dbReference type="GO" id="GO:0030665">
    <property type="term" value="C:clathrin-coated vesicle membrane"/>
    <property type="evidence" value="ECO:0007669"/>
    <property type="project" value="UniProtKB-SubCell"/>
</dbReference>
<dbReference type="GO" id="GO:0005794">
    <property type="term" value="C:Golgi apparatus"/>
    <property type="evidence" value="ECO:0007669"/>
    <property type="project" value="UniProtKB-SubCell"/>
</dbReference>
<dbReference type="GO" id="GO:0035615">
    <property type="term" value="F:clathrin adaptor activity"/>
    <property type="evidence" value="ECO:0000318"/>
    <property type="project" value="GO_Central"/>
</dbReference>
<dbReference type="GO" id="GO:0006886">
    <property type="term" value="P:intracellular protein transport"/>
    <property type="evidence" value="ECO:0007669"/>
    <property type="project" value="InterPro"/>
</dbReference>
<dbReference type="GO" id="GO:0016192">
    <property type="term" value="P:vesicle-mediated transport"/>
    <property type="evidence" value="ECO:0000318"/>
    <property type="project" value="GO_Central"/>
</dbReference>
<dbReference type="CDD" id="cd09258">
    <property type="entry name" value="AP-1_Mu1A_Cterm"/>
    <property type="match status" value="1"/>
</dbReference>
<dbReference type="CDD" id="cd14835">
    <property type="entry name" value="AP1_Mu_N"/>
    <property type="match status" value="1"/>
</dbReference>
<dbReference type="FunFam" id="2.60.40.1170:FF:000002">
    <property type="entry name" value="AP-1 complex subunit mu-1 isoform 1"/>
    <property type="match status" value="1"/>
</dbReference>
<dbReference type="FunFam" id="3.30.450.60:FF:000006">
    <property type="entry name" value="AP-1 complex subunit mu-1 isoform 1"/>
    <property type="match status" value="1"/>
</dbReference>
<dbReference type="Gene3D" id="3.30.450.60">
    <property type="match status" value="1"/>
</dbReference>
<dbReference type="Gene3D" id="2.60.40.1170">
    <property type="entry name" value="Mu homology domain, subdomain B"/>
    <property type="match status" value="2"/>
</dbReference>
<dbReference type="InterPro" id="IPR050431">
    <property type="entry name" value="Adaptor_comp_med_subunit"/>
</dbReference>
<dbReference type="InterPro" id="IPR036168">
    <property type="entry name" value="AP2_Mu_C_sf"/>
</dbReference>
<dbReference type="InterPro" id="IPR022775">
    <property type="entry name" value="AP_mu_sigma_su"/>
</dbReference>
<dbReference type="InterPro" id="IPR001392">
    <property type="entry name" value="Clathrin_mu"/>
</dbReference>
<dbReference type="InterPro" id="IPR018240">
    <property type="entry name" value="Clathrin_mu_CS"/>
</dbReference>
<dbReference type="InterPro" id="IPR011012">
    <property type="entry name" value="Longin-like_dom_sf"/>
</dbReference>
<dbReference type="InterPro" id="IPR028565">
    <property type="entry name" value="MHD"/>
</dbReference>
<dbReference type="PANTHER" id="PTHR10529">
    <property type="entry name" value="AP COMPLEX SUBUNIT MU"/>
    <property type="match status" value="1"/>
</dbReference>
<dbReference type="Pfam" id="PF00928">
    <property type="entry name" value="Adap_comp_sub"/>
    <property type="match status" value="1"/>
</dbReference>
<dbReference type="Pfam" id="PF01217">
    <property type="entry name" value="Clat_adaptor_s"/>
    <property type="match status" value="1"/>
</dbReference>
<dbReference type="PIRSF" id="PIRSF005992">
    <property type="entry name" value="Clathrin_mu"/>
    <property type="match status" value="1"/>
</dbReference>
<dbReference type="PRINTS" id="PR00314">
    <property type="entry name" value="CLATHRINADPT"/>
</dbReference>
<dbReference type="SUPFAM" id="SSF49447">
    <property type="entry name" value="Second domain of Mu2 adaptin subunit (ap50) of ap2 adaptor"/>
    <property type="match status" value="1"/>
</dbReference>
<dbReference type="SUPFAM" id="SSF64356">
    <property type="entry name" value="SNARE-like"/>
    <property type="match status" value="1"/>
</dbReference>
<dbReference type="PROSITE" id="PS00990">
    <property type="entry name" value="CLAT_ADAPTOR_M_1"/>
    <property type="match status" value="1"/>
</dbReference>
<dbReference type="PROSITE" id="PS00991">
    <property type="entry name" value="CLAT_ADAPTOR_M_2"/>
    <property type="match status" value="1"/>
</dbReference>
<dbReference type="PROSITE" id="PS51072">
    <property type="entry name" value="MHD"/>
    <property type="match status" value="1"/>
</dbReference>
<protein>
    <recommendedName>
        <fullName>AP-1 complex subunit mu-1</fullName>
    </recommendedName>
    <alternativeName>
        <fullName>AP-mu chain family member mu1A</fullName>
    </alternativeName>
    <alternativeName>
        <fullName>Adaptor protein complex AP-1 subunit mu-1</fullName>
    </alternativeName>
    <alternativeName>
        <fullName>Adaptor-related protein complex 1 subunit mu-1</fullName>
    </alternativeName>
    <alternativeName>
        <fullName>Clathrin assembly protein complex 1 mu-1 medium chain 1</fullName>
    </alternativeName>
    <alternativeName>
        <fullName>Golgi adaptor HA1/AP1 adaptin mu-1 subunit</fullName>
    </alternativeName>
    <alternativeName>
        <fullName>Mu-adaptin 1</fullName>
    </alternativeName>
    <alternativeName>
        <fullName>Mu1A-adaptin</fullName>
    </alternativeName>
</protein>
<proteinExistence type="evidence at protein level"/>
<sequence>MSASAVYVLDLKGKVLICRNYRGDVDMSEVEHFMPILMEKEEEGMLSPILAHGGVRFMWIKHNNLYLVATSKKNACVSLVFSFLYKVVQVFSEYFKELEEESIRDNFVIIYELLDELMDFGYPQTTDSKILQEYITQEGHKLETGAPRPPATVTNAVSWRSEGIKYRKNEVFLDVIESVNLLVSANGNVLRSEIVGSIKMRVFLSGMPELRLGLNDKVLFDNTGRGKSKSVELEDVKFHQCVRLSRFENDRTISFIPPDGEFELMSYRLNTHVKPLIWIESVIEKHSHSRIEYMIKAKSQFKRRSTANNVEIHIPVPNDADSPKFKTTVGSVKWVPENSEIVWSIKSFPGGKEYLMRAHFGLPSVEAEDKEGKPPISVKFEIPYFTTSGIQVRYLKIIEKSGYQALPWVRYITQNGDYQLRTQ</sequence>
<name>AP1M1_BOVIN</name>
<gene>
    <name evidence="3" type="primary">AP1M1</name>
</gene>